<gene>
    <name evidence="1" type="primary">mraZ</name>
    <name type="ordered locus">A2cp1_3901</name>
</gene>
<sequence>MFFGTFNHAIDAKGRTSLPAKFREALAAAGEPRIVLMQYPHWRAVQALPQSVWNELVKKVMEASPLDARWQRNVLKFVSSAHEVDLDVHGRVLVPPPLREWAGLQKDVVWVGMGRTIHLYDRAAYDEQMSAEIPADQVVDFFRTA</sequence>
<protein>
    <recommendedName>
        <fullName>Transcriptional regulator MraZ</fullName>
    </recommendedName>
</protein>
<proteinExistence type="inferred from homology"/>
<organism>
    <name type="scientific">Anaeromyxobacter dehalogenans (strain 2CP-1 / ATCC BAA-258)</name>
    <dbReference type="NCBI Taxonomy" id="455488"/>
    <lineage>
        <taxon>Bacteria</taxon>
        <taxon>Pseudomonadati</taxon>
        <taxon>Myxococcota</taxon>
        <taxon>Myxococcia</taxon>
        <taxon>Myxococcales</taxon>
        <taxon>Cystobacterineae</taxon>
        <taxon>Anaeromyxobacteraceae</taxon>
        <taxon>Anaeromyxobacter</taxon>
    </lineage>
</organism>
<feature type="chain" id="PRO_1000148845" description="Transcriptional regulator MraZ">
    <location>
        <begin position="1"/>
        <end position="145"/>
    </location>
</feature>
<feature type="domain" description="SpoVT-AbrB 1" evidence="2">
    <location>
        <begin position="5"/>
        <end position="50"/>
    </location>
</feature>
<feature type="domain" description="SpoVT-AbrB 2" evidence="2">
    <location>
        <begin position="81"/>
        <end position="124"/>
    </location>
</feature>
<reference key="1">
    <citation type="submission" date="2009-01" db="EMBL/GenBank/DDBJ databases">
        <title>Complete sequence of Anaeromyxobacter dehalogenans 2CP-1.</title>
        <authorList>
            <person name="Lucas S."/>
            <person name="Copeland A."/>
            <person name="Lapidus A."/>
            <person name="Glavina del Rio T."/>
            <person name="Dalin E."/>
            <person name="Tice H."/>
            <person name="Bruce D."/>
            <person name="Goodwin L."/>
            <person name="Pitluck S."/>
            <person name="Saunders E."/>
            <person name="Brettin T."/>
            <person name="Detter J.C."/>
            <person name="Han C."/>
            <person name="Larimer F."/>
            <person name="Land M."/>
            <person name="Hauser L."/>
            <person name="Kyrpides N."/>
            <person name="Ovchinnikova G."/>
            <person name="Beliaev A.S."/>
            <person name="Richardson P."/>
        </authorList>
    </citation>
    <scope>NUCLEOTIDE SEQUENCE [LARGE SCALE GENOMIC DNA]</scope>
    <source>
        <strain>2CP-1 / ATCC BAA-258</strain>
    </source>
</reference>
<evidence type="ECO:0000255" key="1">
    <source>
        <dbReference type="HAMAP-Rule" id="MF_01008"/>
    </source>
</evidence>
<evidence type="ECO:0000255" key="2">
    <source>
        <dbReference type="PROSITE-ProRule" id="PRU01076"/>
    </source>
</evidence>
<comment type="subunit">
    <text evidence="1">Forms oligomers.</text>
</comment>
<comment type="subcellular location">
    <subcellularLocation>
        <location evidence="1">Cytoplasm</location>
        <location evidence="1">Nucleoid</location>
    </subcellularLocation>
</comment>
<comment type="similarity">
    <text evidence="1">Belongs to the MraZ family.</text>
</comment>
<keyword id="KW-0963">Cytoplasm</keyword>
<keyword id="KW-0238">DNA-binding</keyword>
<keyword id="KW-0677">Repeat</keyword>
<keyword id="KW-0804">Transcription</keyword>
<keyword id="KW-0805">Transcription regulation</keyword>
<name>MRAZ_ANAD2</name>
<accession>B8J7P4</accession>
<dbReference type="EMBL" id="CP001359">
    <property type="protein sequence ID" value="ACL67224.1"/>
    <property type="molecule type" value="Genomic_DNA"/>
</dbReference>
<dbReference type="RefSeq" id="WP_012527790.1">
    <property type="nucleotide sequence ID" value="NC_011891.1"/>
</dbReference>
<dbReference type="SMR" id="B8J7P4"/>
<dbReference type="KEGG" id="acp:A2cp1_3901"/>
<dbReference type="HOGENOM" id="CLU_107907_1_0_7"/>
<dbReference type="Proteomes" id="UP000007089">
    <property type="component" value="Chromosome"/>
</dbReference>
<dbReference type="GO" id="GO:0005737">
    <property type="term" value="C:cytoplasm"/>
    <property type="evidence" value="ECO:0007669"/>
    <property type="project" value="UniProtKB-UniRule"/>
</dbReference>
<dbReference type="GO" id="GO:0009295">
    <property type="term" value="C:nucleoid"/>
    <property type="evidence" value="ECO:0007669"/>
    <property type="project" value="UniProtKB-SubCell"/>
</dbReference>
<dbReference type="GO" id="GO:0003700">
    <property type="term" value="F:DNA-binding transcription factor activity"/>
    <property type="evidence" value="ECO:0007669"/>
    <property type="project" value="UniProtKB-UniRule"/>
</dbReference>
<dbReference type="GO" id="GO:0000976">
    <property type="term" value="F:transcription cis-regulatory region binding"/>
    <property type="evidence" value="ECO:0007669"/>
    <property type="project" value="TreeGrafter"/>
</dbReference>
<dbReference type="GO" id="GO:2000143">
    <property type="term" value="P:negative regulation of DNA-templated transcription initiation"/>
    <property type="evidence" value="ECO:0007669"/>
    <property type="project" value="TreeGrafter"/>
</dbReference>
<dbReference type="CDD" id="cd16321">
    <property type="entry name" value="MraZ_C"/>
    <property type="match status" value="1"/>
</dbReference>
<dbReference type="CDD" id="cd16320">
    <property type="entry name" value="MraZ_N"/>
    <property type="match status" value="1"/>
</dbReference>
<dbReference type="Gene3D" id="3.40.1550.20">
    <property type="entry name" value="Transcriptional regulator MraZ domain"/>
    <property type="match status" value="1"/>
</dbReference>
<dbReference type="HAMAP" id="MF_01008">
    <property type="entry name" value="MraZ"/>
    <property type="match status" value="1"/>
</dbReference>
<dbReference type="InterPro" id="IPR003444">
    <property type="entry name" value="MraZ"/>
</dbReference>
<dbReference type="InterPro" id="IPR035644">
    <property type="entry name" value="MraZ_C"/>
</dbReference>
<dbReference type="InterPro" id="IPR020603">
    <property type="entry name" value="MraZ_dom"/>
</dbReference>
<dbReference type="InterPro" id="IPR035642">
    <property type="entry name" value="MraZ_N"/>
</dbReference>
<dbReference type="InterPro" id="IPR038619">
    <property type="entry name" value="MraZ_sf"/>
</dbReference>
<dbReference type="InterPro" id="IPR007159">
    <property type="entry name" value="SpoVT-AbrB_dom"/>
</dbReference>
<dbReference type="InterPro" id="IPR037914">
    <property type="entry name" value="SpoVT-AbrB_sf"/>
</dbReference>
<dbReference type="PANTHER" id="PTHR34701">
    <property type="entry name" value="TRANSCRIPTIONAL REGULATOR MRAZ"/>
    <property type="match status" value="1"/>
</dbReference>
<dbReference type="PANTHER" id="PTHR34701:SF1">
    <property type="entry name" value="TRANSCRIPTIONAL REGULATOR MRAZ"/>
    <property type="match status" value="1"/>
</dbReference>
<dbReference type="Pfam" id="PF02381">
    <property type="entry name" value="MraZ"/>
    <property type="match status" value="2"/>
</dbReference>
<dbReference type="SUPFAM" id="SSF89447">
    <property type="entry name" value="AbrB/MazE/MraZ-like"/>
    <property type="match status" value="1"/>
</dbReference>
<dbReference type="PROSITE" id="PS51740">
    <property type="entry name" value="SPOVT_ABRB"/>
    <property type="match status" value="2"/>
</dbReference>